<sequence length="384" mass="40437">MSGCDSICAATAPPHVRAIAPYQPGKPISELARELGLAEADIVKLASNENPLGPSPFALAAAQDALLDMALYPDGAGYALKAKLSARLGVDAAQIVLGNGSNDVLDMVARAYLAPGTSAVYAQYAFAVYPIATHTVGAHGIAVAARDFGHDLERMRAAIRDDTRVVWIANPNNPTGTFLPWNEIEAFLETVPPRVLVVLDEAYGEYLAPASRCDTAAWVVRFPNLLISRTFSKAYGLAGLRVGYGIGHADVVDLLNRVRHPFNVNASALAAAEAALDDDAFLARSYALNAAGMQQLLGGLAALDIETVPSKGNFVLARVGDAARINTELLKRGVIVRPVAAYGLPEFLRVSVGLAGQNARFLDALGEVLAAAPGRHPDSRKALP</sequence>
<organism>
    <name type="scientific">Thiobacillus denitrificans (strain ATCC 25259 / T1)</name>
    <dbReference type="NCBI Taxonomy" id="292415"/>
    <lineage>
        <taxon>Bacteria</taxon>
        <taxon>Pseudomonadati</taxon>
        <taxon>Pseudomonadota</taxon>
        <taxon>Betaproteobacteria</taxon>
        <taxon>Nitrosomonadales</taxon>
        <taxon>Thiobacillaceae</taxon>
        <taxon>Thiobacillus</taxon>
    </lineage>
</organism>
<keyword id="KW-0028">Amino-acid biosynthesis</keyword>
<keyword id="KW-0032">Aminotransferase</keyword>
<keyword id="KW-0368">Histidine biosynthesis</keyword>
<keyword id="KW-0663">Pyridoxal phosphate</keyword>
<keyword id="KW-1185">Reference proteome</keyword>
<keyword id="KW-0808">Transferase</keyword>
<protein>
    <recommendedName>
        <fullName evidence="1">Histidinol-phosphate aminotransferase 1</fullName>
        <ecNumber evidence="1">2.6.1.9</ecNumber>
    </recommendedName>
    <alternativeName>
        <fullName evidence="1">Imidazole acetol-phosphate transaminase 1</fullName>
    </alternativeName>
</protein>
<gene>
    <name evidence="1" type="primary">hisC1</name>
    <name type="ordered locus">Tbd_0952</name>
</gene>
<feature type="chain" id="PRO_0000153471" description="Histidinol-phosphate aminotransferase 1">
    <location>
        <begin position="1"/>
        <end position="384"/>
    </location>
</feature>
<feature type="modified residue" description="N6-(pyridoxal phosphate)lysine" evidence="1">
    <location>
        <position position="233"/>
    </location>
</feature>
<name>HIS81_THIDA</name>
<evidence type="ECO:0000255" key="1">
    <source>
        <dbReference type="HAMAP-Rule" id="MF_01023"/>
    </source>
</evidence>
<comment type="catalytic activity">
    <reaction evidence="1">
        <text>L-histidinol phosphate + 2-oxoglutarate = 3-(imidazol-4-yl)-2-oxopropyl phosphate + L-glutamate</text>
        <dbReference type="Rhea" id="RHEA:23744"/>
        <dbReference type="ChEBI" id="CHEBI:16810"/>
        <dbReference type="ChEBI" id="CHEBI:29985"/>
        <dbReference type="ChEBI" id="CHEBI:57766"/>
        <dbReference type="ChEBI" id="CHEBI:57980"/>
        <dbReference type="EC" id="2.6.1.9"/>
    </reaction>
</comment>
<comment type="cofactor">
    <cofactor evidence="1">
        <name>pyridoxal 5'-phosphate</name>
        <dbReference type="ChEBI" id="CHEBI:597326"/>
    </cofactor>
</comment>
<comment type="pathway">
    <text evidence="1">Amino-acid biosynthesis; L-histidine biosynthesis; L-histidine from 5-phospho-alpha-D-ribose 1-diphosphate: step 7/9.</text>
</comment>
<comment type="subunit">
    <text evidence="1">Homodimer.</text>
</comment>
<comment type="similarity">
    <text evidence="1">Belongs to the class-II pyridoxal-phosphate-dependent aminotransferase family. Histidinol-phosphate aminotransferase subfamily.</text>
</comment>
<proteinExistence type="inferred from homology"/>
<dbReference type="EC" id="2.6.1.9" evidence="1"/>
<dbReference type="EMBL" id="CP000116">
    <property type="protein sequence ID" value="AAZ96905.1"/>
    <property type="molecule type" value="Genomic_DNA"/>
</dbReference>
<dbReference type="RefSeq" id="WP_011311464.1">
    <property type="nucleotide sequence ID" value="NC_007404.1"/>
</dbReference>
<dbReference type="SMR" id="Q3SK85"/>
<dbReference type="STRING" id="292415.Tbd_0952"/>
<dbReference type="KEGG" id="tbd:Tbd_0952"/>
<dbReference type="eggNOG" id="COG0079">
    <property type="taxonomic scope" value="Bacteria"/>
</dbReference>
<dbReference type="HOGENOM" id="CLU_017584_3_3_4"/>
<dbReference type="OrthoDB" id="9813612at2"/>
<dbReference type="UniPathway" id="UPA00031">
    <property type="reaction ID" value="UER00012"/>
</dbReference>
<dbReference type="Proteomes" id="UP000008291">
    <property type="component" value="Chromosome"/>
</dbReference>
<dbReference type="GO" id="GO:0004400">
    <property type="term" value="F:histidinol-phosphate transaminase activity"/>
    <property type="evidence" value="ECO:0007669"/>
    <property type="project" value="UniProtKB-UniRule"/>
</dbReference>
<dbReference type="GO" id="GO:0030170">
    <property type="term" value="F:pyridoxal phosphate binding"/>
    <property type="evidence" value="ECO:0007669"/>
    <property type="project" value="InterPro"/>
</dbReference>
<dbReference type="GO" id="GO:0000105">
    <property type="term" value="P:L-histidine biosynthetic process"/>
    <property type="evidence" value="ECO:0007669"/>
    <property type="project" value="UniProtKB-UniRule"/>
</dbReference>
<dbReference type="CDD" id="cd00609">
    <property type="entry name" value="AAT_like"/>
    <property type="match status" value="1"/>
</dbReference>
<dbReference type="Gene3D" id="3.90.1150.10">
    <property type="entry name" value="Aspartate Aminotransferase, domain 1"/>
    <property type="match status" value="1"/>
</dbReference>
<dbReference type="Gene3D" id="3.40.640.10">
    <property type="entry name" value="Type I PLP-dependent aspartate aminotransferase-like (Major domain)"/>
    <property type="match status" value="1"/>
</dbReference>
<dbReference type="HAMAP" id="MF_01023">
    <property type="entry name" value="HisC_aminotrans_2"/>
    <property type="match status" value="1"/>
</dbReference>
<dbReference type="InterPro" id="IPR001917">
    <property type="entry name" value="Aminotrans_II_pyridoxalP_BS"/>
</dbReference>
<dbReference type="InterPro" id="IPR004839">
    <property type="entry name" value="Aminotransferase_I/II_large"/>
</dbReference>
<dbReference type="InterPro" id="IPR005861">
    <property type="entry name" value="HisP_aminotrans"/>
</dbReference>
<dbReference type="InterPro" id="IPR050106">
    <property type="entry name" value="HistidinolP_aminotransfase"/>
</dbReference>
<dbReference type="InterPro" id="IPR015424">
    <property type="entry name" value="PyrdxlP-dep_Trfase"/>
</dbReference>
<dbReference type="InterPro" id="IPR015421">
    <property type="entry name" value="PyrdxlP-dep_Trfase_major"/>
</dbReference>
<dbReference type="InterPro" id="IPR015422">
    <property type="entry name" value="PyrdxlP-dep_Trfase_small"/>
</dbReference>
<dbReference type="NCBIfam" id="TIGR01141">
    <property type="entry name" value="hisC"/>
    <property type="match status" value="1"/>
</dbReference>
<dbReference type="PANTHER" id="PTHR43643:SF3">
    <property type="entry name" value="HISTIDINOL-PHOSPHATE AMINOTRANSFERASE"/>
    <property type="match status" value="1"/>
</dbReference>
<dbReference type="PANTHER" id="PTHR43643">
    <property type="entry name" value="HISTIDINOL-PHOSPHATE AMINOTRANSFERASE 2"/>
    <property type="match status" value="1"/>
</dbReference>
<dbReference type="Pfam" id="PF00155">
    <property type="entry name" value="Aminotran_1_2"/>
    <property type="match status" value="1"/>
</dbReference>
<dbReference type="SUPFAM" id="SSF53383">
    <property type="entry name" value="PLP-dependent transferases"/>
    <property type="match status" value="1"/>
</dbReference>
<dbReference type="PROSITE" id="PS00599">
    <property type="entry name" value="AA_TRANSFER_CLASS_2"/>
    <property type="match status" value="1"/>
</dbReference>
<accession>Q3SK85</accession>
<reference key="1">
    <citation type="journal article" date="2006" name="J. Bacteriol.">
        <title>The genome sequence of the obligately chemolithoautotrophic, facultatively anaerobic bacterium Thiobacillus denitrificans.</title>
        <authorList>
            <person name="Beller H.R."/>
            <person name="Chain P.S."/>
            <person name="Letain T.E."/>
            <person name="Chakicherla A."/>
            <person name="Larimer F.W."/>
            <person name="Richardson P.M."/>
            <person name="Coleman M.A."/>
            <person name="Wood A.P."/>
            <person name="Kelly D.P."/>
        </authorList>
    </citation>
    <scope>NUCLEOTIDE SEQUENCE [LARGE SCALE GENOMIC DNA]</scope>
    <source>
        <strain>ATCC 25259 / T1</strain>
    </source>
</reference>